<protein>
    <recommendedName>
        <fullName>Probable periplasmic serine endoprotease DegP-like</fullName>
        <ecNumber>3.4.21.107</ecNumber>
    </recommendedName>
    <alternativeName>
        <fullName>Protease Do</fullName>
    </alternativeName>
</protein>
<name>DEGPL_PSEPG</name>
<feature type="signal peptide" evidence="2">
    <location>
        <begin position="1"/>
        <end position="27"/>
    </location>
</feature>
<feature type="chain" id="PRO_5000305886" description="Probable periplasmic serine endoprotease DegP-like">
    <location>
        <begin position="28"/>
        <end position="477"/>
    </location>
</feature>
<feature type="domain" description="PDZ 1" evidence="3">
    <location>
        <begin position="264"/>
        <end position="355"/>
    </location>
</feature>
<feature type="domain" description="PDZ 2" evidence="3">
    <location>
        <begin position="361"/>
        <end position="466"/>
    </location>
</feature>
<feature type="active site" description="Charge relay system" evidence="1">
    <location>
        <position position="117"/>
    </location>
</feature>
<feature type="active site" description="Charge relay system" evidence="2">
    <location>
        <position position="147"/>
    </location>
</feature>
<feature type="active site" description="Charge relay system" evidence="1">
    <location>
        <position position="220"/>
    </location>
</feature>
<feature type="binding site" evidence="1">
    <location>
        <begin position="218"/>
        <end position="220"/>
    </location>
    <ligand>
        <name>substrate</name>
    </ligand>
</feature>
<feature type="binding site" evidence="1">
    <location>
        <begin position="275"/>
        <end position="279"/>
    </location>
    <ligand>
        <name>substrate</name>
    </ligand>
</feature>
<gene>
    <name type="ordered locus">PputGB1_4377</name>
</gene>
<dbReference type="EC" id="3.4.21.107"/>
<dbReference type="EMBL" id="CP000926">
    <property type="protein sequence ID" value="ABZ00266.1"/>
    <property type="molecule type" value="Genomic_DNA"/>
</dbReference>
<dbReference type="RefSeq" id="WP_012273930.1">
    <property type="nucleotide sequence ID" value="NC_010322.1"/>
</dbReference>
<dbReference type="SMR" id="B0KV30"/>
<dbReference type="MEROPS" id="S01.453"/>
<dbReference type="KEGG" id="ppg:PputGB1_4377"/>
<dbReference type="eggNOG" id="COG0265">
    <property type="taxonomic scope" value="Bacteria"/>
</dbReference>
<dbReference type="HOGENOM" id="CLU_020120_1_0_6"/>
<dbReference type="Proteomes" id="UP000002157">
    <property type="component" value="Chromosome"/>
</dbReference>
<dbReference type="GO" id="GO:0042597">
    <property type="term" value="C:periplasmic space"/>
    <property type="evidence" value="ECO:0007669"/>
    <property type="project" value="UniProtKB-SubCell"/>
</dbReference>
<dbReference type="GO" id="GO:0004252">
    <property type="term" value="F:serine-type endopeptidase activity"/>
    <property type="evidence" value="ECO:0007669"/>
    <property type="project" value="InterPro"/>
</dbReference>
<dbReference type="GO" id="GO:0006508">
    <property type="term" value="P:proteolysis"/>
    <property type="evidence" value="ECO:0007669"/>
    <property type="project" value="UniProtKB-KW"/>
</dbReference>
<dbReference type="CDD" id="cd10839">
    <property type="entry name" value="cpPDZ1_DegP-like"/>
    <property type="match status" value="1"/>
</dbReference>
<dbReference type="FunFam" id="2.30.42.10:FF:000037">
    <property type="entry name" value="Periplasmic serine endoprotease DegP-like"/>
    <property type="match status" value="1"/>
</dbReference>
<dbReference type="FunFam" id="2.40.10.120:FF:000007">
    <property type="entry name" value="Periplasmic serine endoprotease DegP-like"/>
    <property type="match status" value="1"/>
</dbReference>
<dbReference type="Gene3D" id="2.30.42.10">
    <property type="match status" value="2"/>
</dbReference>
<dbReference type="Gene3D" id="2.40.10.120">
    <property type="match status" value="1"/>
</dbReference>
<dbReference type="InterPro" id="IPR001478">
    <property type="entry name" value="PDZ"/>
</dbReference>
<dbReference type="InterPro" id="IPR036034">
    <property type="entry name" value="PDZ_sf"/>
</dbReference>
<dbReference type="InterPro" id="IPR011782">
    <property type="entry name" value="Pept_S1C_Do"/>
</dbReference>
<dbReference type="InterPro" id="IPR009003">
    <property type="entry name" value="Peptidase_S1_PA"/>
</dbReference>
<dbReference type="InterPro" id="IPR001940">
    <property type="entry name" value="Peptidase_S1C"/>
</dbReference>
<dbReference type="NCBIfam" id="TIGR02037">
    <property type="entry name" value="degP_htrA_DO"/>
    <property type="match status" value="1"/>
</dbReference>
<dbReference type="PANTHER" id="PTHR22939:SF130">
    <property type="entry name" value="PERIPLASMIC SERINE ENDOPROTEASE DEGP-LIKE-RELATED"/>
    <property type="match status" value="1"/>
</dbReference>
<dbReference type="PANTHER" id="PTHR22939">
    <property type="entry name" value="SERINE PROTEASE FAMILY S1C HTRA-RELATED"/>
    <property type="match status" value="1"/>
</dbReference>
<dbReference type="Pfam" id="PF13180">
    <property type="entry name" value="PDZ_2"/>
    <property type="match status" value="2"/>
</dbReference>
<dbReference type="Pfam" id="PF13365">
    <property type="entry name" value="Trypsin_2"/>
    <property type="match status" value="1"/>
</dbReference>
<dbReference type="PRINTS" id="PR00834">
    <property type="entry name" value="PROTEASES2C"/>
</dbReference>
<dbReference type="SMART" id="SM00228">
    <property type="entry name" value="PDZ"/>
    <property type="match status" value="2"/>
</dbReference>
<dbReference type="SUPFAM" id="SSF50156">
    <property type="entry name" value="PDZ domain-like"/>
    <property type="match status" value="2"/>
</dbReference>
<dbReference type="SUPFAM" id="SSF50494">
    <property type="entry name" value="Trypsin-like serine proteases"/>
    <property type="match status" value="1"/>
</dbReference>
<dbReference type="PROSITE" id="PS50106">
    <property type="entry name" value="PDZ"/>
    <property type="match status" value="2"/>
</dbReference>
<keyword id="KW-0378">Hydrolase</keyword>
<keyword id="KW-0574">Periplasm</keyword>
<keyword id="KW-0645">Protease</keyword>
<keyword id="KW-0677">Repeat</keyword>
<keyword id="KW-0720">Serine protease</keyword>
<keyword id="KW-0732">Signal</keyword>
<keyword id="KW-0346">Stress response</keyword>
<reference key="1">
    <citation type="submission" date="2008-01" db="EMBL/GenBank/DDBJ databases">
        <title>Complete sequence of Pseudomonas putida GB-1.</title>
        <authorList>
            <consortium name="US DOE Joint Genome Institute"/>
            <person name="Copeland A."/>
            <person name="Lucas S."/>
            <person name="Lapidus A."/>
            <person name="Barry K."/>
            <person name="Glavina del Rio T."/>
            <person name="Dalin E."/>
            <person name="Tice H."/>
            <person name="Pitluck S."/>
            <person name="Bruce D."/>
            <person name="Goodwin L."/>
            <person name="Chertkov O."/>
            <person name="Brettin T."/>
            <person name="Detter J.C."/>
            <person name="Han C."/>
            <person name="Kuske C.R."/>
            <person name="Schmutz J."/>
            <person name="Larimer F."/>
            <person name="Land M."/>
            <person name="Hauser L."/>
            <person name="Kyrpides N."/>
            <person name="Kim E."/>
            <person name="McCarthy J.K."/>
            <person name="Richardson P."/>
        </authorList>
    </citation>
    <scope>NUCLEOTIDE SEQUENCE [LARGE SCALE GENOMIC DNA]</scope>
    <source>
        <strain>GB-1</strain>
    </source>
</reference>
<evidence type="ECO:0000250" key="1"/>
<evidence type="ECO:0000255" key="2"/>
<evidence type="ECO:0000255" key="3">
    <source>
        <dbReference type="PROSITE-ProRule" id="PRU00143"/>
    </source>
</evidence>
<evidence type="ECO:0000305" key="4"/>
<accession>B0KV30</accession>
<organism>
    <name type="scientific">Pseudomonas putida (strain GB-1)</name>
    <dbReference type="NCBI Taxonomy" id="76869"/>
    <lineage>
        <taxon>Bacteria</taxon>
        <taxon>Pseudomonadati</taxon>
        <taxon>Pseudomonadota</taxon>
        <taxon>Gammaproteobacteria</taxon>
        <taxon>Pseudomonadales</taxon>
        <taxon>Pseudomonadaceae</taxon>
        <taxon>Pseudomonas</taxon>
    </lineage>
</organism>
<proteinExistence type="inferred from homology"/>
<sequence>MSIPRLKSYLTMFAAVLMLGQVLTAQAEEALPDFTSLVEQASPAVVNISTKQKLPDRRIAAGQMPDLEGLPPMFREFFERNMPQQPRSPRGDRQREAQSLGSGFIISSDGYVLTNNHVVADADEIIVRLSDRSELQAKLVGTDPRTDVALLKVEGKNLPIVKLGDSEKLKVGEWVLAIGSPFGFDHSVTKGIVSAKGRTLPNDTYVPFIQTDVAINPGNSGGPLFNMKGEVVGINSQIFTRSGGFMGLSFAIPIDVAIDVSNQLKKDGKVSRGWLGVVIQEVNKDLAESFGLDKPAGALVAQVLENGPAAKGGLQVGDVILSMNGQPIVMSADLPHLVGGLKDGEKAKLEIIRNGKRQNLDISVGALPDDDADIGTGAEGSAERSSNRLGVSVADLTAEQKKSLELKGGVVIKEVQDGPAAMIGLRPGDVISHLNNQAIGSAKEFTEIAKELPKNRSVSMRVLRQGRASFITFKLAE</sequence>
<comment type="function">
    <text evidence="1">Might be efficient in the degradation of transiently denatured and unfolded proteins which accumulate in the periplasm following stress conditions.</text>
</comment>
<comment type="catalytic activity">
    <reaction>
        <text>Acts on substrates that are at least partially unfolded. The cleavage site P1 residue is normally between a pair of hydrophobic residues, such as Val-|-Val.</text>
        <dbReference type="EC" id="3.4.21.107"/>
    </reaction>
</comment>
<comment type="subcellular location">
    <subcellularLocation>
        <location evidence="4">Periplasm</location>
    </subcellularLocation>
</comment>
<comment type="similarity">
    <text evidence="4">Belongs to the peptidase S1C family.</text>
</comment>